<reference key="1">
    <citation type="journal article" date="2012" name="BMC Genomics">
        <title>Tools to kill: Genome of one of the most destructive plant pathogenic fungi Macrophomina phaseolina.</title>
        <authorList>
            <person name="Islam M.S."/>
            <person name="Haque M.S."/>
            <person name="Islam M.M."/>
            <person name="Emdad E.M."/>
            <person name="Halim A."/>
            <person name="Hossen Q.M.M."/>
            <person name="Hossain M.Z."/>
            <person name="Ahmed B."/>
            <person name="Rahim S."/>
            <person name="Rahman M.S."/>
            <person name="Alam M.M."/>
            <person name="Hou S."/>
            <person name="Wan X."/>
            <person name="Saito J.A."/>
            <person name="Alam M."/>
        </authorList>
    </citation>
    <scope>NUCLEOTIDE SEQUENCE [LARGE SCALE GENOMIC DNA]</scope>
    <source>
        <strain>MS6</strain>
    </source>
</reference>
<reference key="2">
    <citation type="journal article" date="2022" name="Front. Microbiol.">
        <title>Discovery and biosynthesis of macrophasetins from the plant pathogen fungus Macrophomina phaseolina.</title>
        <authorList>
            <person name="Yu C."/>
            <person name="Chen L."/>
            <person name="Gao Y.L."/>
            <person name="Liu J."/>
            <person name="Li P.L."/>
            <person name="Zhang M.L."/>
            <person name="Li Q."/>
            <person name="Zhang H.D."/>
            <person name="Tang M.C."/>
            <person name="Li L."/>
        </authorList>
    </citation>
    <scope>FUNCTION</scope>
    <scope>DOMAIN</scope>
    <scope>CATALYTIC ACTIVITY</scope>
    <scope>PATHWAY</scope>
</reference>
<protein>
    <recommendedName>
        <fullName evidence="7">Hybrid PKS-NRPS synthetase mpsA</fullName>
        <ecNumber evidence="6">2.3.1.-</ecNumber>
        <ecNumber evidence="6">6.3.2.-</ecNumber>
    </recommendedName>
    <alternativeName>
        <fullName evidence="7">Macrophasetins biosynthesis cluster protein A</fullName>
    </alternativeName>
</protein>
<accession>K2QYX5</accession>
<gene>
    <name evidence="7" type="primary">mpsA</name>
    <name type="ORF">MPH_07623</name>
</gene>
<organism>
    <name type="scientific">Macrophomina phaseolina (strain MS6)</name>
    <name type="common">Charcoal rot fungus</name>
    <dbReference type="NCBI Taxonomy" id="1126212"/>
    <lineage>
        <taxon>Eukaryota</taxon>
        <taxon>Fungi</taxon>
        <taxon>Dikarya</taxon>
        <taxon>Ascomycota</taxon>
        <taxon>Pezizomycotina</taxon>
        <taxon>Dothideomycetes</taxon>
        <taxon>Dothideomycetes incertae sedis</taxon>
        <taxon>Botryosphaeriales</taxon>
        <taxon>Botryosphaeriaceae</taxon>
        <taxon>Macrophomina</taxon>
    </lineage>
</organism>
<proteinExistence type="evidence at protein level"/>
<evidence type="ECO:0000255" key="1"/>
<evidence type="ECO:0000255" key="2">
    <source>
        <dbReference type="PROSITE-ProRule" id="PRU00258"/>
    </source>
</evidence>
<evidence type="ECO:0000255" key="3">
    <source>
        <dbReference type="PROSITE-ProRule" id="PRU01348"/>
    </source>
</evidence>
<evidence type="ECO:0000255" key="4">
    <source>
        <dbReference type="PROSITE-ProRule" id="PRU01363"/>
    </source>
</evidence>
<evidence type="ECO:0000256" key="5">
    <source>
        <dbReference type="SAM" id="MobiDB-lite"/>
    </source>
</evidence>
<evidence type="ECO:0000269" key="6">
    <source>
    </source>
</evidence>
<evidence type="ECO:0000303" key="7">
    <source>
    </source>
</evidence>
<evidence type="ECO:0000305" key="8"/>
<evidence type="ECO:0000305" key="9">
    <source>
    </source>
</evidence>
<comment type="function">
    <text evidence="6">Hybrid PKS-NRPS synthetase; part of the gene cluster that mediates the biosynthesis of macrophasetins, 3-decalinoyltetramic acids (DTAs) which feature a tetramate (pyrrolidine-2,4-dione) unit connected to a decalin fragment and that have potent bioactivities (PubMed:36452919). The PKS-NRPS mpsA together with its associated enoylreductase partner mpsG incorporate one unit of acetyl-CoA, seven units of malonyl-CoA, and one unit of L-alanine to assemble the linear tetramic acid intermediate corresponding to the backbone of macrophasetins (PubMed:36452919). Without the Diels-Alderase mpsD, the mpsA/G product can undergo the non-enzymatic intramolecular Diels-Alder (IMDA) reaction to generate both macrophasetin A and macrophasetin B (PubMed:36452919). Catalyzed by mpsD, the linear tetramic acid intermediate is thoroughly converted to macrophasetin A via the endo-IMDA reaction in a regioselective and stereoselective manner (PubMed:36452919). Finally, the cytochrome P450 monooxygenase mpsF catalyzes the hydroxylation at C20 to yield the end product macrophasetin C (PubMed:36452919).</text>
</comment>
<comment type="cofactor">
    <cofactor evidence="2">
        <name>pantetheine 4'-phosphate</name>
        <dbReference type="ChEBI" id="CHEBI:47942"/>
    </cofactor>
</comment>
<comment type="pathway">
    <text evidence="6">Secondary metabolite biosynthesis.</text>
</comment>
<comment type="domain">
    <text evidence="9">NRP synthetases are composed of discrete domains (adenylation (A), thiolation (T) or peptidyl carrier protein (PCP) and condensation (C) domains) which when grouped together are referred to as a single module. Each module is responsible for the recognition (via the A domain) and incorporation of a single amino acid into the growing peptide product. Thus, an NRP synthetase is generally composed of one or more modules and can terminate in a thioesterase domain (TE) that releases the newly synthesized peptide from the enzyme. Occasionally, epimerase (E) domains (responsible for L- to D-amino acid conversion) are present within the NRP synthetase. MpsA also contains a polyketide synthase module (PKS) consisting of several catalytic domains including a ketoacyl synthase domain (KS), an acyl transferase domain (AT), a dehydratase domain (DH), a methyltransferase domain (MT), and a ketoreductase domain (KR). Instead of a thioesterase domain (TE), mpsA finishes with a reductase-like domain (R) for peptide release. MpsA has the following architecture: KS-AT-DH-MT-KR-PCP-C-A-T-R.</text>
</comment>
<comment type="similarity">
    <text evidence="8">In the C-terminal section; belongs to the NRP synthetase family.</text>
</comment>
<keyword id="KW-0436">Ligase</keyword>
<keyword id="KW-0489">Methyltransferase</keyword>
<keyword id="KW-0511">Multifunctional enzyme</keyword>
<keyword id="KW-0560">Oxidoreductase</keyword>
<keyword id="KW-0596">Phosphopantetheine</keyword>
<keyword id="KW-0597">Phosphoprotein</keyword>
<keyword id="KW-1185">Reference proteome</keyword>
<keyword id="KW-0677">Repeat</keyword>
<keyword id="KW-0808">Transferase</keyword>
<sequence>MPQRNEPIAVIGSACQFPGHSTTPSKLWELLREPRDLLQTIPSDRFNAESWYHADSAHHGTSNVTKSYFLAEDPKAFDSQFFNIPPKECEAIDPQQRLLMETVYDSLCAAGLSMESLRGSSTACYVGQMCDDWSGIMMRDWDSLPQYTATGISRSIMSNRVSYFFDWHGPSMTIDTACSSSLVAVHEAVQTLRSGDSNVAVACGANLILSPGMYIAESKLKMLSPDGRSRMWDEGANGYARGEGIAAVVLKTLSQALADGDHIECIVRETGFNQDGRTTGITMPSNVAQAALIRDTYKKAGLDPFNPKDRPQFFHAHGTGTPAGDPQEAEAISRAFFKDGEKADNKLYVGSIKTIIGHTEGTAGLASLIGTSLAMQHRTVPPNMHFTKLADRVAPFYTNLEVPTAAKPWPAAPAGQPLRASVNSFGFGGANAHAILESYEPEVHSAPAAGALPLFTPITFSANSEKSLQAMLASYSDFLKTNEPINVRDVAWTHQTRLSALAFRTAVAGQTAAEIVNSIDAALEKKENLGIRASGVEKPSILGVFTGQGAQWPTMGAALIKASPYARDTIAAMDRSLQELPEADRPSWSIRAELEAPKESSRLAEAALSQPLCTAVQVVLVDLIKAAGIKFKAVVGHSSGEIGAAYAAGLVSASDAIRIAYYRGVYAKLAGSKSGAKGAMMAVGTSLEDAREFCELEEFEGRLTVAASNAASSVTLSGDEDAIDQAEEIFKDESKFARKLRVDTAYHSFHMIPCSEPYKKALDGCGVEIGDVTSTTWFSSVVPGTKMSKETLGSQYWVDNMKNTVLFSQAITAAVKEAGPFDLAIEVGPHPALKGPCLNNIEDASGNAETPYTGLLSRGGDDVNAFSAALGFIWERFGASAVDFDAYDKLVSGSSEPKSLAVDLPRYPWDHDRTYWFESRVSAGYKYREEPPHPILGVKSIEGTTGPQVQWRNILTQREVSWMPGHKLQGQTVFPAAGYVSMAIEAVMTLAGENSVQLIELSDFVIGRAISFFDESAAQEVMFTLNVTKNTEEAISATFEVTSCPQGERQMSHNANGTISITLGIPSPDTLAAVPVQQFNMVDVEVDRFYKALSDMGYHYSPPFKAMSNIRRRVDAAVGEMTDVRGDHWEDNLLLHPGLLDTSFQAIFAAFSSPGDERLWSIHVPTIIKRMTFNPAVASFPPGEETVWPWQAAITSGPHQTLRADIEVFAENGEDVLFEVEGISMVPFSNATAENDCHLFSNFVYDIDGPSGELAGPNHPTDFDVKLATDSERFSFYWMRTLLETITPEEEEQTLIHYKRMLKWCRFVFDQVKNGEHPHVKPEALNDTLDVVEKLVEQYGQRADIDLIRAVGEDLPMKIRTNGNIVETMVRDGMLDAFYEEGLGLHIANNWEANMAVQLTHRYPRMNVLEIGGGTGGSTRIILPRLGQNFSSYTFTDVSAGFFEAAEERFKEFADRMIFKTLDMEKDITEQGFQEGHYDMILASNVLHVGADLDATMSNVRRLLKPGGWLINMETVTFYPCLRNGFAMAGLSGWWIGADTGRPWGPTIDIAEWDKVYKRTGFSGVDTYAPNFDSLHPFSVMAAQAVDERVQFLRQPLETEPADAKKEELVVIGGQTEEVSEIVDRVVELLTPRFSSVTRVESVDAFADGSATVPTCVLNLSELDVPVMQELMDDQPDKFEALKEIFSSARDILWVTKGSRAENPHARMIVNMARAIRKEIPSVNFQNLDVEVLDEGSADLFAATMLRHQALHRWEKELLPGSFRWSKEPEMHLENGKIYIPRLKSVKEMNDRYNSTKRQITHEVNAKDARIELVGTKDSYELREPSPLKPALDAEGKVIVKVSKSLLQSVKVPTAGYYFLCYGTTESGESVIAFSDSSESVVAVPQNWTIPQPPKVDASKALLSVAANILADLVITVAPAQGTLLAHDPDPIVAAALSKQAATKRIRVFFTTTQADKKGPNWIYIHPHSPRRLLKKTLPKGVSLFINLSGREDSKLMKEISEYLPAGCTLSDQSPFFSNTVESRPAANPELVAKYLSTGWAKAKATSFAIPGTKTVLPLKDVPGHPGKAEQLSVVDWEADAVVPVSVQPIDTGDNLFKPDRTYFMVGLSGEVGQSITQWMVRHGARYVVLTSRNPKVNSEWIETLEDEYNAVIKTMSLDVTDQSSLHACYDKISRTMPPIAGVAHGAMVLIDSLFQNMDYEDLMTVLRPKILGAMYLDELFSEDTLDFFILFSSITGTVGNTGQSNYIGANAFMEALGLQRRRRGLAASILGISSLVGIGYVERAENFDAEYFAKSGYRNISEQDLHMLFAEAIVRGRPESKENHEIITGIVPTYADKDSKAGYLQDIKFSHLALERSQARNDGDDSASVPVRIQLQTAVTKDEVVEIMQAGFVARIKKVLRIPAEDEFSLTASLVEQGVDSLVAVEVRSWFLKEVDVDMPVLKVLGGASIADLLNDALDRLAPEIVPNLGADPSSVSRPPVAPAPVPSVSRPASNAPPVLNKQLPLPSSAAELKAEREREAEAKRKREEERRAAELARKAAEEAKRAEELRKARERRESREQQKADVLKKARDALIKSEITEPMSFGQSRFWFLDQVLRDRTTFNMAISVRLEGRIRAEDMKKAVQAVVLRHEALRTRYFTTGEHGDAPMQGIIPDPSFVPFMHKRIKTEGEAQKELDAVRAHVWDMNSWAGIRVHLLSMPSDRAHFLIIGCHHIAMDGVSLNIFYADLEKAYKGKSLPALPLASQYRAFARQQRLDYAAGKMDADLAFYRAMIPEPQTVKPLPLFPFARVRDRVPLETYAEVSATARIDATLTSAIRAAARELRATTFHFYLAALQVLVFKLLEKKDPGCRDFFLGIADANRTDAKFMGTLGFFLNLLPLRCERGEDSAPFGDVVKAARAKAYAALERSRLPFDVLLERLDALPRSAAHAPLFQVFVDYRQGVQERQRYMGVKAAGEDWYTARTGYDVSLDVIENAAGDSRLEFKLQEALYDAEGARLLMQAYVHVLRQCAERPGREWGAVEVWPREVVERAVSVGRVPSPKYEWPATVGHQIDEIIKRHTASLAIKDGRGNVLTYAQMDDRVNSIAAALIENGAADGGRVGVFQNPTADWICSVVAIFRAGAVYIPLDLRNPLKRLASIVEAARPAAILAHSETWDKVEALGGTDSKAINVSALPDSHQPVANRAKTDGPAVILFTSGSTGTPKGMHMSHANLVKHMEVWTKQATLPEGATKLVLQQSAYTFDKSLEQILTPITMGGALYVVPAEQRGDPVSITDIIVSEGVTYTDATPSEYLMWFRYAGETLKKAKSWMFAVTAGEAVTESLLAEFRKLDLPVTLVNNYGPAEATLDATLEELPYRTMKPGDQISAGYPLPGYSVYIVDEDLKPVPIGCPGEVILAGVGIVGGYLNKPELTAQKFVPDVFANNGGIMYRTGDRGRLSDKGQLLYEGRIEGDTQIKLRGVRMELEDVEASIMSTANGALSRAVVSLRGEEGSEFLVAHVVFAPNFTVDQAVFINRLPTTLPLPQYMVPALFAVVDTLPLTPHLKVDRKAVKSLAIPDQAPKAPTTTANLTPTESRLAAIWQQMIPGAPAALSPDTEFFHIGGNSLLLVKLQALIRQTFGAQLRLIDVMDAASLAGMARAIDDATGGAQQQSPTTATTIDWAAEAAVPGDLATKIHLPASTASTPPKKSTDLTIVLTGATGLLGRNLLKHLAADPRVKRIYAVAVRPSPSSSAAPVSRIPLLSDKLVTKSGDLTLPLLGLSPADAAALAAEADVFVHVAANRSFWDAYASLRAANVGAVKDIVALAAARRVPVHFVSSGEVGKYSALTPPPGDGSDGYVASKWAAERFLENAAAEMAGLQVIVHRPLKPDGAEARPAPEDVLGELVWLAKGLGRRPVLEGLAGSLGVVPIVDVVEGVAQALFGAGDGLEREGELKVMRHVATMNVDIGAFAESVAADGELMELEGMDALTWTGEAKKAGWSMFMVSQEIVMAKGGEVVVSKR</sequence>
<dbReference type="EC" id="2.3.1.-" evidence="6"/>
<dbReference type="EC" id="6.3.2.-" evidence="6"/>
<dbReference type="EMBL" id="AHHD01000324">
    <property type="protein sequence ID" value="EKG15176.1"/>
    <property type="molecule type" value="Genomic_DNA"/>
</dbReference>
<dbReference type="SMR" id="K2QYX5"/>
<dbReference type="STRING" id="1126212.K2QYX5"/>
<dbReference type="VEuPathDB" id="FungiDB:MPH_07623"/>
<dbReference type="eggNOG" id="KOG1178">
    <property type="taxonomic scope" value="Eukaryota"/>
</dbReference>
<dbReference type="eggNOG" id="KOG1202">
    <property type="taxonomic scope" value="Eukaryota"/>
</dbReference>
<dbReference type="HOGENOM" id="CLU_000022_37_8_1"/>
<dbReference type="InParanoid" id="K2QYX5"/>
<dbReference type="OrthoDB" id="329835at2759"/>
<dbReference type="Proteomes" id="UP000007129">
    <property type="component" value="Unassembled WGS sequence"/>
</dbReference>
<dbReference type="GO" id="GO:0004315">
    <property type="term" value="F:3-oxoacyl-[acyl-carrier-protein] synthase activity"/>
    <property type="evidence" value="ECO:0007669"/>
    <property type="project" value="InterPro"/>
</dbReference>
<dbReference type="GO" id="GO:0004312">
    <property type="term" value="F:fatty acid synthase activity"/>
    <property type="evidence" value="ECO:0007669"/>
    <property type="project" value="TreeGrafter"/>
</dbReference>
<dbReference type="GO" id="GO:0016874">
    <property type="term" value="F:ligase activity"/>
    <property type="evidence" value="ECO:0007669"/>
    <property type="project" value="UniProtKB-KW"/>
</dbReference>
<dbReference type="GO" id="GO:0008168">
    <property type="term" value="F:methyltransferase activity"/>
    <property type="evidence" value="ECO:0007669"/>
    <property type="project" value="UniProtKB-KW"/>
</dbReference>
<dbReference type="GO" id="GO:0016491">
    <property type="term" value="F:oxidoreductase activity"/>
    <property type="evidence" value="ECO:0007669"/>
    <property type="project" value="UniProtKB-KW"/>
</dbReference>
<dbReference type="GO" id="GO:0031177">
    <property type="term" value="F:phosphopantetheine binding"/>
    <property type="evidence" value="ECO:0007669"/>
    <property type="project" value="InterPro"/>
</dbReference>
<dbReference type="GO" id="GO:0006633">
    <property type="term" value="P:fatty acid biosynthetic process"/>
    <property type="evidence" value="ECO:0007669"/>
    <property type="project" value="InterPro"/>
</dbReference>
<dbReference type="GO" id="GO:0032259">
    <property type="term" value="P:methylation"/>
    <property type="evidence" value="ECO:0007669"/>
    <property type="project" value="UniProtKB-KW"/>
</dbReference>
<dbReference type="GO" id="GO:0009403">
    <property type="term" value="P:toxin biosynthetic process"/>
    <property type="evidence" value="ECO:0007669"/>
    <property type="project" value="UniProtKB-ARBA"/>
</dbReference>
<dbReference type="CDD" id="cd05930">
    <property type="entry name" value="A_NRPS"/>
    <property type="match status" value="1"/>
</dbReference>
<dbReference type="CDD" id="cd02440">
    <property type="entry name" value="AdoMet_MTases"/>
    <property type="match status" value="1"/>
</dbReference>
<dbReference type="CDD" id="cd19532">
    <property type="entry name" value="C_PKS-NRPS"/>
    <property type="match status" value="1"/>
</dbReference>
<dbReference type="CDD" id="cd00833">
    <property type="entry name" value="PKS"/>
    <property type="match status" value="1"/>
</dbReference>
<dbReference type="Gene3D" id="3.30.300.30">
    <property type="match status" value="1"/>
</dbReference>
<dbReference type="Gene3D" id="3.30.70.3290">
    <property type="match status" value="1"/>
</dbReference>
<dbReference type="Gene3D" id="3.40.47.10">
    <property type="match status" value="1"/>
</dbReference>
<dbReference type="Gene3D" id="1.10.1200.10">
    <property type="entry name" value="ACP-like"/>
    <property type="match status" value="2"/>
</dbReference>
<dbReference type="Gene3D" id="3.30.559.10">
    <property type="entry name" value="Chloramphenicol acetyltransferase-like domain"/>
    <property type="match status" value="1"/>
</dbReference>
<dbReference type="Gene3D" id="3.40.366.10">
    <property type="entry name" value="Malonyl-Coenzyme A Acyl Carrier Protein, domain 2"/>
    <property type="match status" value="1"/>
</dbReference>
<dbReference type="Gene3D" id="3.40.50.12780">
    <property type="entry name" value="N-terminal domain of ligase-like"/>
    <property type="match status" value="1"/>
</dbReference>
<dbReference type="Gene3D" id="3.40.50.720">
    <property type="entry name" value="NAD(P)-binding Rossmann-like Domain"/>
    <property type="match status" value="2"/>
</dbReference>
<dbReference type="Gene3D" id="3.30.559.30">
    <property type="entry name" value="Nonribosomal peptide synthetase, condensation domain"/>
    <property type="match status" value="1"/>
</dbReference>
<dbReference type="Gene3D" id="3.10.129.110">
    <property type="entry name" value="Polyketide synthase dehydratase"/>
    <property type="match status" value="1"/>
</dbReference>
<dbReference type="Gene3D" id="3.40.50.150">
    <property type="entry name" value="Vaccinia Virus protein VP39"/>
    <property type="match status" value="1"/>
</dbReference>
<dbReference type="InterPro" id="IPR010071">
    <property type="entry name" value="AA_adenyl_dom"/>
</dbReference>
<dbReference type="InterPro" id="IPR001227">
    <property type="entry name" value="Ac_transferase_dom_sf"/>
</dbReference>
<dbReference type="InterPro" id="IPR036736">
    <property type="entry name" value="ACP-like_sf"/>
</dbReference>
<dbReference type="InterPro" id="IPR014043">
    <property type="entry name" value="Acyl_transferase_dom"/>
</dbReference>
<dbReference type="InterPro" id="IPR016035">
    <property type="entry name" value="Acyl_Trfase/lysoPLipase"/>
</dbReference>
<dbReference type="InterPro" id="IPR045851">
    <property type="entry name" value="AMP-bd_C_sf"/>
</dbReference>
<dbReference type="InterPro" id="IPR020845">
    <property type="entry name" value="AMP-binding_CS"/>
</dbReference>
<dbReference type="InterPro" id="IPR000873">
    <property type="entry name" value="AMP-dep_synth/lig_dom"/>
</dbReference>
<dbReference type="InterPro" id="IPR042099">
    <property type="entry name" value="ANL_N_sf"/>
</dbReference>
<dbReference type="InterPro" id="IPR023213">
    <property type="entry name" value="CAT-like_dom_sf"/>
</dbReference>
<dbReference type="InterPro" id="IPR001242">
    <property type="entry name" value="Condensatn"/>
</dbReference>
<dbReference type="InterPro" id="IPR013120">
    <property type="entry name" value="Far_NAD-bd"/>
</dbReference>
<dbReference type="InterPro" id="IPR018201">
    <property type="entry name" value="Ketoacyl_synth_AS"/>
</dbReference>
<dbReference type="InterPro" id="IPR014031">
    <property type="entry name" value="Ketoacyl_synth_C"/>
</dbReference>
<dbReference type="InterPro" id="IPR014030">
    <property type="entry name" value="Ketoacyl_synth_N"/>
</dbReference>
<dbReference type="InterPro" id="IPR016036">
    <property type="entry name" value="Malonyl_transacylase_ACP-bd"/>
</dbReference>
<dbReference type="InterPro" id="IPR013217">
    <property type="entry name" value="Methyltransf_12"/>
</dbReference>
<dbReference type="InterPro" id="IPR036291">
    <property type="entry name" value="NAD(P)-bd_dom_sf"/>
</dbReference>
<dbReference type="InterPro" id="IPR056501">
    <property type="entry name" value="NAD-bd_HRPKS_sdrA"/>
</dbReference>
<dbReference type="InterPro" id="IPR032821">
    <property type="entry name" value="PKS_assoc"/>
</dbReference>
<dbReference type="InterPro" id="IPR020841">
    <property type="entry name" value="PKS_Beta-ketoAc_synthase_dom"/>
</dbReference>
<dbReference type="InterPro" id="IPR042104">
    <property type="entry name" value="PKS_dehydratase_sf"/>
</dbReference>
<dbReference type="InterPro" id="IPR020807">
    <property type="entry name" value="PKS_DH"/>
</dbReference>
<dbReference type="InterPro" id="IPR049551">
    <property type="entry name" value="PKS_DH_C"/>
</dbReference>
<dbReference type="InterPro" id="IPR049552">
    <property type="entry name" value="PKS_DH_N"/>
</dbReference>
<dbReference type="InterPro" id="IPR013968">
    <property type="entry name" value="PKS_KR"/>
</dbReference>
<dbReference type="InterPro" id="IPR049900">
    <property type="entry name" value="PKS_mFAS_DH"/>
</dbReference>
<dbReference type="InterPro" id="IPR050091">
    <property type="entry name" value="PKS_NRPS_Biosynth_Enz"/>
</dbReference>
<dbReference type="InterPro" id="IPR020806">
    <property type="entry name" value="PKS_PP-bd"/>
</dbReference>
<dbReference type="InterPro" id="IPR009081">
    <property type="entry name" value="PP-bd_ACP"/>
</dbReference>
<dbReference type="InterPro" id="IPR029063">
    <property type="entry name" value="SAM-dependent_MTases_sf"/>
</dbReference>
<dbReference type="InterPro" id="IPR016039">
    <property type="entry name" value="Thiolase-like"/>
</dbReference>
<dbReference type="NCBIfam" id="TIGR01733">
    <property type="entry name" value="AA-adenyl-dom"/>
    <property type="match status" value="1"/>
</dbReference>
<dbReference type="PANTHER" id="PTHR43775">
    <property type="entry name" value="FATTY ACID SYNTHASE"/>
    <property type="match status" value="1"/>
</dbReference>
<dbReference type="PANTHER" id="PTHR43775:SF20">
    <property type="entry name" value="HYBRID PKS-NRPS SYNTHETASE APDA"/>
    <property type="match status" value="1"/>
</dbReference>
<dbReference type="Pfam" id="PF00698">
    <property type="entry name" value="Acyl_transf_1"/>
    <property type="match status" value="1"/>
</dbReference>
<dbReference type="Pfam" id="PF00501">
    <property type="entry name" value="AMP-binding"/>
    <property type="match status" value="1"/>
</dbReference>
<dbReference type="Pfam" id="PF00668">
    <property type="entry name" value="Condensation"/>
    <property type="match status" value="1"/>
</dbReference>
<dbReference type="Pfam" id="PF16197">
    <property type="entry name" value="KAsynt_C_assoc"/>
    <property type="match status" value="1"/>
</dbReference>
<dbReference type="Pfam" id="PF00109">
    <property type="entry name" value="ketoacyl-synt"/>
    <property type="match status" value="1"/>
</dbReference>
<dbReference type="Pfam" id="PF02801">
    <property type="entry name" value="Ketoacyl-synt_C"/>
    <property type="match status" value="1"/>
</dbReference>
<dbReference type="Pfam" id="PF08659">
    <property type="entry name" value="KR"/>
    <property type="match status" value="1"/>
</dbReference>
<dbReference type="Pfam" id="PF08242">
    <property type="entry name" value="Methyltransf_12"/>
    <property type="match status" value="1"/>
</dbReference>
<dbReference type="Pfam" id="PF23114">
    <property type="entry name" value="NAD-bd_HRPKS_sdrA"/>
    <property type="match status" value="1"/>
</dbReference>
<dbReference type="Pfam" id="PF07993">
    <property type="entry name" value="NAD_binding_4"/>
    <property type="match status" value="1"/>
</dbReference>
<dbReference type="Pfam" id="PF21089">
    <property type="entry name" value="PKS_DH_N"/>
    <property type="match status" value="1"/>
</dbReference>
<dbReference type="Pfam" id="PF00550">
    <property type="entry name" value="PP-binding"/>
    <property type="match status" value="2"/>
</dbReference>
<dbReference type="Pfam" id="PF14765">
    <property type="entry name" value="PS-DH"/>
    <property type="match status" value="1"/>
</dbReference>
<dbReference type="SMART" id="SM00827">
    <property type="entry name" value="PKS_AT"/>
    <property type="match status" value="1"/>
</dbReference>
<dbReference type="SMART" id="SM00826">
    <property type="entry name" value="PKS_DH"/>
    <property type="match status" value="1"/>
</dbReference>
<dbReference type="SMART" id="SM00822">
    <property type="entry name" value="PKS_KR"/>
    <property type="match status" value="1"/>
</dbReference>
<dbReference type="SMART" id="SM00825">
    <property type="entry name" value="PKS_KS"/>
    <property type="match status" value="1"/>
</dbReference>
<dbReference type="SMART" id="SM00823">
    <property type="entry name" value="PKS_PP"/>
    <property type="match status" value="2"/>
</dbReference>
<dbReference type="SUPFAM" id="SSF56801">
    <property type="entry name" value="Acetyl-CoA synthetase-like"/>
    <property type="match status" value="1"/>
</dbReference>
<dbReference type="SUPFAM" id="SSF47336">
    <property type="entry name" value="ACP-like"/>
    <property type="match status" value="2"/>
</dbReference>
<dbReference type="SUPFAM" id="SSF52777">
    <property type="entry name" value="CoA-dependent acyltransferases"/>
    <property type="match status" value="2"/>
</dbReference>
<dbReference type="SUPFAM" id="SSF52151">
    <property type="entry name" value="FabD/lysophospholipase-like"/>
    <property type="match status" value="1"/>
</dbReference>
<dbReference type="SUPFAM" id="SSF51735">
    <property type="entry name" value="NAD(P)-binding Rossmann-fold domains"/>
    <property type="match status" value="2"/>
</dbReference>
<dbReference type="SUPFAM" id="SSF55048">
    <property type="entry name" value="Probable ACP-binding domain of malonyl-CoA ACP transacylase"/>
    <property type="match status" value="1"/>
</dbReference>
<dbReference type="SUPFAM" id="SSF53335">
    <property type="entry name" value="S-adenosyl-L-methionine-dependent methyltransferases"/>
    <property type="match status" value="1"/>
</dbReference>
<dbReference type="SUPFAM" id="SSF53901">
    <property type="entry name" value="Thiolase-like"/>
    <property type="match status" value="1"/>
</dbReference>
<dbReference type="PROSITE" id="PS00061">
    <property type="entry name" value="ADH_SHORT"/>
    <property type="match status" value="1"/>
</dbReference>
<dbReference type="PROSITE" id="PS00455">
    <property type="entry name" value="AMP_BINDING"/>
    <property type="match status" value="1"/>
</dbReference>
<dbReference type="PROSITE" id="PS50075">
    <property type="entry name" value="CARRIER"/>
    <property type="match status" value="2"/>
</dbReference>
<dbReference type="PROSITE" id="PS00606">
    <property type="entry name" value="KS3_1"/>
    <property type="match status" value="1"/>
</dbReference>
<dbReference type="PROSITE" id="PS52004">
    <property type="entry name" value="KS3_2"/>
    <property type="match status" value="1"/>
</dbReference>
<dbReference type="PROSITE" id="PS52019">
    <property type="entry name" value="PKS_MFAS_DH"/>
    <property type="match status" value="1"/>
</dbReference>
<feature type="chain" id="PRO_0000457825" description="Hybrid PKS-NRPS synthetase mpsA">
    <location>
        <begin position="1"/>
        <end position="4004"/>
    </location>
</feature>
<feature type="domain" description="Ketosynthase family 3 (KS3)" evidence="3">
    <location>
        <begin position="5"/>
        <end position="438"/>
    </location>
</feature>
<feature type="domain" description="Malonyl-CoA:ACP transacylase (MAT)" evidence="1 9">
    <location>
        <begin position="544"/>
        <end position="867"/>
    </location>
</feature>
<feature type="domain" description="PKS/mFAS DH" evidence="4">
    <location>
        <begin position="933"/>
        <end position="1234"/>
    </location>
</feature>
<feature type="domain" description="Ketoreductase (KR)" evidence="1 9">
    <location>
        <begin position="2102"/>
        <end position="2272"/>
    </location>
</feature>
<feature type="domain" description="Carrier 1" evidence="2">
    <location>
        <begin position="2384"/>
        <end position="2462"/>
    </location>
</feature>
<feature type="domain" description="Carrier 2" evidence="2">
    <location>
        <begin position="3570"/>
        <end position="3647"/>
    </location>
</feature>
<feature type="region of interest" description="Dehydratase (DH) domain" evidence="1 9">
    <location>
        <begin position="933"/>
        <end position="1233"/>
    </location>
</feature>
<feature type="region of interest" description="N-terminal hotdog fold" evidence="4">
    <location>
        <begin position="933"/>
        <end position="1066"/>
    </location>
</feature>
<feature type="region of interest" description="C-terminal hotdog fold" evidence="4">
    <location>
        <begin position="1081"/>
        <end position="1234"/>
    </location>
</feature>
<feature type="region of interest" description="Methyltransferase (MT) domain" evidence="1 9">
    <location>
        <begin position="1289"/>
        <end position="1575"/>
    </location>
</feature>
<feature type="region of interest" description="Disordered" evidence="5">
    <location>
        <begin position="2471"/>
        <end position="2540"/>
    </location>
</feature>
<feature type="region of interest" description="Condensation (C) domain" evidence="1 9">
    <location>
        <begin position="2584"/>
        <end position="3019"/>
    </location>
</feature>
<feature type="region of interest" description="Adenylation (A) (KR) domain" evidence="1 9">
    <location>
        <begin position="3060"/>
        <end position="3459"/>
    </location>
</feature>
<feature type="region of interest" description="Reductase (RED) domain" evidence="1 9">
    <location>
        <begin position="3694"/>
        <end position="3924"/>
    </location>
</feature>
<feature type="compositionally biased region" description="Low complexity" evidence="5">
    <location>
        <begin position="2488"/>
        <end position="2500"/>
    </location>
</feature>
<feature type="compositionally biased region" description="Basic and acidic residues" evidence="5">
    <location>
        <begin position="2514"/>
        <end position="2540"/>
    </location>
</feature>
<feature type="active site" description="For beta-ketoacyl synthase activity" evidence="3">
    <location>
        <position position="178"/>
    </location>
</feature>
<feature type="active site" description="For beta-ketoacyl synthase activity" evidence="3">
    <location>
        <position position="317"/>
    </location>
</feature>
<feature type="active site" description="For beta-ketoacyl synthase activity" evidence="3">
    <location>
        <position position="358"/>
    </location>
</feature>
<feature type="active site" description="Proton acceptor; for dehydratase activity" evidence="4">
    <location>
        <position position="966"/>
    </location>
</feature>
<feature type="active site" description="Proton donor; for dehydratase activity" evidence="4">
    <location>
        <position position="1141"/>
    </location>
</feature>
<feature type="modified residue" description="O-(pantetheine 4'-phosphoryl)serine" evidence="2">
    <location>
        <position position="2422"/>
    </location>
</feature>
<feature type="modified residue" description="O-(pantetheine 4'-phosphoryl)serine" evidence="2">
    <location>
        <position position="3607"/>
    </location>
</feature>
<name>MPSA_MACPH</name>